<proteinExistence type="evidence at transcript level"/>
<name>CTGE4_HUMAN</name>
<dbReference type="EMBL" id="AK292236">
    <property type="protein sequence ID" value="BAF84925.1"/>
    <property type="molecule type" value="mRNA"/>
</dbReference>
<dbReference type="EMBL" id="AC004889">
    <property type="status" value="NOT_ANNOTATED_CDS"/>
    <property type="molecule type" value="Genomic_DNA"/>
</dbReference>
<dbReference type="EMBL" id="AF338232">
    <property type="protein sequence ID" value="AAN77609.1"/>
    <property type="status" value="ALT_SEQ"/>
    <property type="molecule type" value="mRNA"/>
</dbReference>
<dbReference type="CCDS" id="CCDS55176.1"/>
<dbReference type="RefSeq" id="NP_001265436.1">
    <property type="nucleotide sequence ID" value="NM_001278507.1"/>
</dbReference>
<dbReference type="RefSeq" id="NP_940897.2">
    <property type="nucleotide sequence ID" value="NM_198495.3"/>
</dbReference>
<dbReference type="SMR" id="Q8IX94"/>
<dbReference type="BioGRID" id="419270">
    <property type="interactions" value="2"/>
</dbReference>
<dbReference type="BioGRID" id="936688">
    <property type="interactions" value="6"/>
</dbReference>
<dbReference type="FunCoup" id="Q8IX94">
    <property type="interactions" value="5"/>
</dbReference>
<dbReference type="iPTMnet" id="Q8IX94"/>
<dbReference type="PhosphoSitePlus" id="Q8IX94"/>
<dbReference type="BioMuta" id="CTAGE4"/>
<dbReference type="DMDM" id="229462987"/>
<dbReference type="jPOST" id="Q8IX94"/>
<dbReference type="MassIVE" id="Q8IX94"/>
<dbReference type="PaxDb" id="9606-ENSP00000419539"/>
<dbReference type="PeptideAtlas" id="Q8IX94"/>
<dbReference type="Antibodypedia" id="56189">
    <property type="antibodies" value="58 antibodies from 10 providers"/>
</dbReference>
<dbReference type="DNASU" id="100128553"/>
<dbReference type="Ensembl" id="ENST00000486333.2">
    <property type="protein sequence ID" value="ENSP00000419539.1"/>
    <property type="gene ID" value="ENSG00000288784.1"/>
</dbReference>
<dbReference type="GeneID" id="100128553"/>
<dbReference type="GeneID" id="100142659"/>
<dbReference type="KEGG" id="hsa:100128553"/>
<dbReference type="KEGG" id="hsa:100142659"/>
<dbReference type="MANE-Select" id="ENST00000486333.2">
    <property type="protein sequence ID" value="ENSP00000419539.1"/>
    <property type="RefSeq nucleotide sequence ID" value="NM_198495.3"/>
    <property type="RefSeq protein sequence ID" value="NP_940897.2"/>
</dbReference>
<dbReference type="UCSC" id="uc010lpc.5">
    <property type="organism name" value="human"/>
</dbReference>
<dbReference type="AGR" id="HGNC:24772"/>
<dbReference type="AGR" id="HGNC:37294"/>
<dbReference type="CTD" id="100128553"/>
<dbReference type="CTD" id="100142659"/>
<dbReference type="DisGeNET" id="100128553"/>
<dbReference type="GeneCards" id="CTAGE4"/>
<dbReference type="HGNC" id="HGNC:24772">
    <property type="gene designation" value="CTAGE4"/>
</dbReference>
<dbReference type="HPA" id="ENSG00000288784">
    <property type="expression patterns" value="Tissue enhanced (skin)"/>
</dbReference>
<dbReference type="MIM" id="608910">
    <property type="type" value="gene"/>
</dbReference>
<dbReference type="neXtProt" id="NX_Q8IX94"/>
<dbReference type="PharmGKB" id="PA134946406"/>
<dbReference type="VEuPathDB" id="HostDB:ENSG00000225932"/>
<dbReference type="eggNOG" id="ENOG502QUND">
    <property type="taxonomic scope" value="Eukaryota"/>
</dbReference>
<dbReference type="GeneTree" id="ENSGT00950000182767"/>
<dbReference type="HOGENOM" id="CLU_002106_2_0_1"/>
<dbReference type="InParanoid" id="Q8IX94"/>
<dbReference type="OMA" id="VEENYWI"/>
<dbReference type="OrthoDB" id="3548878at2759"/>
<dbReference type="PAN-GO" id="Q8IX94">
    <property type="GO annotations" value="5 GO annotations based on evolutionary models"/>
</dbReference>
<dbReference type="PhylomeDB" id="Q8IX94"/>
<dbReference type="TreeFam" id="TF333137"/>
<dbReference type="PathwayCommons" id="Q8IX94"/>
<dbReference type="BioGRID-ORCS" id="100128553">
    <property type="hits" value="30 hits in 652 CRISPR screens"/>
</dbReference>
<dbReference type="BioGRID-ORCS" id="100142659">
    <property type="hits" value="53 hits in 211 CRISPR screens"/>
</dbReference>
<dbReference type="ChiTaRS" id="CTAGE4">
    <property type="organism name" value="human"/>
</dbReference>
<dbReference type="Pharos" id="Q8IX94">
    <property type="development level" value="Tdark"/>
</dbReference>
<dbReference type="PRO" id="PR:Q8IX94"/>
<dbReference type="Proteomes" id="UP000005640">
    <property type="component" value="Chromosome 7"/>
</dbReference>
<dbReference type="RNAct" id="Q8IX94">
    <property type="molecule type" value="protein"/>
</dbReference>
<dbReference type="Bgee" id="ENSG00000225932">
    <property type="expression patterns" value="Expressed in lower esophagus mucosa and 88 other cell types or tissues"/>
</dbReference>
<dbReference type="GO" id="GO:0070971">
    <property type="term" value="C:endoplasmic reticulum exit site"/>
    <property type="evidence" value="ECO:0000318"/>
    <property type="project" value="GO_Central"/>
</dbReference>
<dbReference type="GO" id="GO:0005789">
    <property type="term" value="C:endoplasmic reticulum membrane"/>
    <property type="evidence" value="ECO:0000318"/>
    <property type="project" value="GO_Central"/>
</dbReference>
<dbReference type="GO" id="GO:0006888">
    <property type="term" value="P:endoplasmic reticulum to Golgi vesicle-mediated transport"/>
    <property type="evidence" value="ECO:0000318"/>
    <property type="project" value="GO_Central"/>
</dbReference>
<dbReference type="GO" id="GO:0009306">
    <property type="term" value="P:protein secretion"/>
    <property type="evidence" value="ECO:0000318"/>
    <property type="project" value="GO_Central"/>
</dbReference>
<dbReference type="GO" id="GO:0035459">
    <property type="term" value="P:vesicle cargo loading"/>
    <property type="evidence" value="ECO:0000318"/>
    <property type="project" value="GO_Central"/>
</dbReference>
<dbReference type="FunFam" id="1.20.5.340:FF:000044">
    <property type="entry name" value="MIA SH3 domain ER export factor 2"/>
    <property type="match status" value="1"/>
</dbReference>
<dbReference type="InterPro" id="IPR051500">
    <property type="entry name" value="cTAGE_MIA/OTOR"/>
</dbReference>
<dbReference type="PANTHER" id="PTHR23158:SF57">
    <property type="entry name" value="CTAGE FAMILY MEMBER 15-RELATED"/>
    <property type="match status" value="1"/>
</dbReference>
<dbReference type="PANTHER" id="PTHR23158">
    <property type="entry name" value="MELANOMA INHIBITORY ACTIVITY-RELATED"/>
    <property type="match status" value="1"/>
</dbReference>
<evidence type="ECO:0000255" key="1"/>
<evidence type="ECO:0000256" key="2">
    <source>
        <dbReference type="SAM" id="MobiDB-lite"/>
    </source>
</evidence>
<evidence type="ECO:0000269" key="3">
    <source>
    </source>
</evidence>
<evidence type="ECO:0000305" key="4"/>
<reference key="1">
    <citation type="journal article" date="2004" name="Nat. Genet.">
        <title>Complete sequencing and characterization of 21,243 full-length human cDNAs.</title>
        <authorList>
            <person name="Ota T."/>
            <person name="Suzuki Y."/>
            <person name="Nishikawa T."/>
            <person name="Otsuki T."/>
            <person name="Sugiyama T."/>
            <person name="Irie R."/>
            <person name="Wakamatsu A."/>
            <person name="Hayashi K."/>
            <person name="Sato H."/>
            <person name="Nagai K."/>
            <person name="Kimura K."/>
            <person name="Makita H."/>
            <person name="Sekine M."/>
            <person name="Obayashi M."/>
            <person name="Nishi T."/>
            <person name="Shibahara T."/>
            <person name="Tanaka T."/>
            <person name="Ishii S."/>
            <person name="Yamamoto J."/>
            <person name="Saito K."/>
            <person name="Kawai Y."/>
            <person name="Isono Y."/>
            <person name="Nakamura Y."/>
            <person name="Nagahari K."/>
            <person name="Murakami K."/>
            <person name="Yasuda T."/>
            <person name="Iwayanagi T."/>
            <person name="Wagatsuma M."/>
            <person name="Shiratori A."/>
            <person name="Sudo H."/>
            <person name="Hosoiri T."/>
            <person name="Kaku Y."/>
            <person name="Kodaira H."/>
            <person name="Kondo H."/>
            <person name="Sugawara M."/>
            <person name="Takahashi M."/>
            <person name="Kanda K."/>
            <person name="Yokoi T."/>
            <person name="Furuya T."/>
            <person name="Kikkawa E."/>
            <person name="Omura Y."/>
            <person name="Abe K."/>
            <person name="Kamihara K."/>
            <person name="Katsuta N."/>
            <person name="Sato K."/>
            <person name="Tanikawa M."/>
            <person name="Yamazaki M."/>
            <person name="Ninomiya K."/>
            <person name="Ishibashi T."/>
            <person name="Yamashita H."/>
            <person name="Murakawa K."/>
            <person name="Fujimori K."/>
            <person name="Tanai H."/>
            <person name="Kimata M."/>
            <person name="Watanabe M."/>
            <person name="Hiraoka S."/>
            <person name="Chiba Y."/>
            <person name="Ishida S."/>
            <person name="Ono Y."/>
            <person name="Takiguchi S."/>
            <person name="Watanabe S."/>
            <person name="Yosida M."/>
            <person name="Hotuta T."/>
            <person name="Kusano J."/>
            <person name="Kanehori K."/>
            <person name="Takahashi-Fujii A."/>
            <person name="Hara H."/>
            <person name="Tanase T.-O."/>
            <person name="Nomura Y."/>
            <person name="Togiya S."/>
            <person name="Komai F."/>
            <person name="Hara R."/>
            <person name="Takeuchi K."/>
            <person name="Arita M."/>
            <person name="Imose N."/>
            <person name="Musashino K."/>
            <person name="Yuuki H."/>
            <person name="Oshima A."/>
            <person name="Sasaki N."/>
            <person name="Aotsuka S."/>
            <person name="Yoshikawa Y."/>
            <person name="Matsunawa H."/>
            <person name="Ichihara T."/>
            <person name="Shiohata N."/>
            <person name="Sano S."/>
            <person name="Moriya S."/>
            <person name="Momiyama H."/>
            <person name="Satoh N."/>
            <person name="Takami S."/>
            <person name="Terashima Y."/>
            <person name="Suzuki O."/>
            <person name="Nakagawa S."/>
            <person name="Senoh A."/>
            <person name="Mizoguchi H."/>
            <person name="Goto Y."/>
            <person name="Shimizu F."/>
            <person name="Wakebe H."/>
            <person name="Hishigaki H."/>
            <person name="Watanabe T."/>
            <person name="Sugiyama A."/>
            <person name="Takemoto M."/>
            <person name="Kawakami B."/>
            <person name="Yamazaki M."/>
            <person name="Watanabe K."/>
            <person name="Kumagai A."/>
            <person name="Itakura S."/>
            <person name="Fukuzumi Y."/>
            <person name="Fujimori Y."/>
            <person name="Komiyama M."/>
            <person name="Tashiro H."/>
            <person name="Tanigami A."/>
            <person name="Fujiwara T."/>
            <person name="Ono T."/>
            <person name="Yamada K."/>
            <person name="Fujii Y."/>
            <person name="Ozaki K."/>
            <person name="Hirao M."/>
            <person name="Ohmori Y."/>
            <person name="Kawabata A."/>
            <person name="Hikiji T."/>
            <person name="Kobatake N."/>
            <person name="Inagaki H."/>
            <person name="Ikema Y."/>
            <person name="Okamoto S."/>
            <person name="Okitani R."/>
            <person name="Kawakami T."/>
            <person name="Noguchi S."/>
            <person name="Itoh T."/>
            <person name="Shigeta K."/>
            <person name="Senba T."/>
            <person name="Matsumura K."/>
            <person name="Nakajima Y."/>
            <person name="Mizuno T."/>
            <person name="Morinaga M."/>
            <person name="Sasaki M."/>
            <person name="Togashi T."/>
            <person name="Oyama M."/>
            <person name="Hata H."/>
            <person name="Watanabe M."/>
            <person name="Komatsu T."/>
            <person name="Mizushima-Sugano J."/>
            <person name="Satoh T."/>
            <person name="Shirai Y."/>
            <person name="Takahashi Y."/>
            <person name="Nakagawa K."/>
            <person name="Okumura K."/>
            <person name="Nagase T."/>
            <person name="Nomura N."/>
            <person name="Kikuchi H."/>
            <person name="Masuho Y."/>
            <person name="Yamashita R."/>
            <person name="Nakai K."/>
            <person name="Yada T."/>
            <person name="Nakamura Y."/>
            <person name="Ohara O."/>
            <person name="Isogai T."/>
            <person name="Sugano S."/>
        </authorList>
    </citation>
    <scope>NUCLEOTIDE SEQUENCE [LARGE SCALE MRNA]</scope>
    <source>
        <tissue>Testis</tissue>
    </source>
</reference>
<reference key="2">
    <citation type="journal article" date="2003" name="Nature">
        <title>The DNA sequence of human chromosome 7.</title>
        <authorList>
            <person name="Hillier L.W."/>
            <person name="Fulton R.S."/>
            <person name="Fulton L.A."/>
            <person name="Graves T.A."/>
            <person name="Pepin K.H."/>
            <person name="Wagner-McPherson C."/>
            <person name="Layman D."/>
            <person name="Maas J."/>
            <person name="Jaeger S."/>
            <person name="Walker R."/>
            <person name="Wylie K."/>
            <person name="Sekhon M."/>
            <person name="Becker M.C."/>
            <person name="O'Laughlin M.D."/>
            <person name="Schaller M.E."/>
            <person name="Fewell G.A."/>
            <person name="Delehaunty K.D."/>
            <person name="Miner T.L."/>
            <person name="Nash W.E."/>
            <person name="Cordes M."/>
            <person name="Du H."/>
            <person name="Sun H."/>
            <person name="Edwards J."/>
            <person name="Bradshaw-Cordum H."/>
            <person name="Ali J."/>
            <person name="Andrews S."/>
            <person name="Isak A."/>
            <person name="Vanbrunt A."/>
            <person name="Nguyen C."/>
            <person name="Du F."/>
            <person name="Lamar B."/>
            <person name="Courtney L."/>
            <person name="Kalicki J."/>
            <person name="Ozersky P."/>
            <person name="Bielicki L."/>
            <person name="Scott K."/>
            <person name="Holmes A."/>
            <person name="Harkins R."/>
            <person name="Harris A."/>
            <person name="Strong C.M."/>
            <person name="Hou S."/>
            <person name="Tomlinson C."/>
            <person name="Dauphin-Kohlberg S."/>
            <person name="Kozlowicz-Reilly A."/>
            <person name="Leonard S."/>
            <person name="Rohlfing T."/>
            <person name="Rock S.M."/>
            <person name="Tin-Wollam A.-M."/>
            <person name="Abbott A."/>
            <person name="Minx P."/>
            <person name="Maupin R."/>
            <person name="Strowmatt C."/>
            <person name="Latreille P."/>
            <person name="Miller N."/>
            <person name="Johnson D."/>
            <person name="Murray J."/>
            <person name="Woessner J.P."/>
            <person name="Wendl M.C."/>
            <person name="Yang S.-P."/>
            <person name="Schultz B.R."/>
            <person name="Wallis J.W."/>
            <person name="Spieth J."/>
            <person name="Bieri T.A."/>
            <person name="Nelson J.O."/>
            <person name="Berkowicz N."/>
            <person name="Wohldmann P.E."/>
            <person name="Cook L.L."/>
            <person name="Hickenbotham M.T."/>
            <person name="Eldred J."/>
            <person name="Williams D."/>
            <person name="Bedell J.A."/>
            <person name="Mardis E.R."/>
            <person name="Clifton S.W."/>
            <person name="Chissoe S.L."/>
            <person name="Marra M.A."/>
            <person name="Raymond C."/>
            <person name="Haugen E."/>
            <person name="Gillett W."/>
            <person name="Zhou Y."/>
            <person name="James R."/>
            <person name="Phelps K."/>
            <person name="Iadanoto S."/>
            <person name="Bubb K."/>
            <person name="Simms E."/>
            <person name="Levy R."/>
            <person name="Clendenning J."/>
            <person name="Kaul R."/>
            <person name="Kent W.J."/>
            <person name="Furey T.S."/>
            <person name="Baertsch R.A."/>
            <person name="Brent M.R."/>
            <person name="Keibler E."/>
            <person name="Flicek P."/>
            <person name="Bork P."/>
            <person name="Suyama M."/>
            <person name="Bailey J.A."/>
            <person name="Portnoy M.E."/>
            <person name="Torrents D."/>
            <person name="Chinwalla A.T."/>
            <person name="Gish W.R."/>
            <person name="Eddy S.R."/>
            <person name="McPherson J.D."/>
            <person name="Olson M.V."/>
            <person name="Eichler E.E."/>
            <person name="Green E.D."/>
            <person name="Waterston R.H."/>
            <person name="Wilson R.K."/>
        </authorList>
    </citation>
    <scope>NUCLEOTIDE SEQUENCE [LARGE SCALE GENOMIC DNA]</scope>
</reference>
<reference key="3">
    <citation type="journal article" date="2003" name="J. Invest. Dermatol.">
        <title>cTAGE: a cutaneous T cell lymphoma associated antigen family with tumor-specific splicing.</title>
        <authorList>
            <person name="Usener D."/>
            <person name="Schadendorf D."/>
            <person name="Koch J."/>
            <person name="Duebel S."/>
            <person name="Eichmueller S."/>
        </authorList>
    </citation>
    <scope>NUCLEOTIDE SEQUENCE [MRNA] OF 209-674</scope>
    <scope>TISSUE SPECIFICITY</scope>
    <source>
        <tissue>Testis</tissue>
    </source>
</reference>
<organism>
    <name type="scientific">Homo sapiens</name>
    <name type="common">Human</name>
    <dbReference type="NCBI Taxonomy" id="9606"/>
    <lineage>
        <taxon>Eukaryota</taxon>
        <taxon>Metazoa</taxon>
        <taxon>Chordata</taxon>
        <taxon>Craniata</taxon>
        <taxon>Vertebrata</taxon>
        <taxon>Euteleostomi</taxon>
        <taxon>Mammalia</taxon>
        <taxon>Eutheria</taxon>
        <taxon>Euarchontoglires</taxon>
        <taxon>Primates</taxon>
        <taxon>Haplorrhini</taxon>
        <taxon>Catarrhini</taxon>
        <taxon>Hominidae</taxon>
        <taxon>Homo</taxon>
    </lineage>
</organism>
<comment type="function">
    <text>Tumor-associated antigen.</text>
</comment>
<comment type="subcellular location">
    <subcellularLocation>
        <location evidence="4">Membrane</location>
        <topology evidence="4">Single-pass membrane protein</topology>
    </subcellularLocation>
</comment>
<comment type="tissue specificity">
    <text evidence="3">Expressed in testis, placenta and skin. Expressed at lower level in mammary gland and stomach.</text>
</comment>
<comment type="miscellaneous">
    <text>Tumor-associated antigen found in several cutaneous T-cell lymphoma (CTCL). Also found in colorectal and breast carcinomas, head and neck squamous cell carcinomas and melanoma.</text>
</comment>
<comment type="similarity">
    <text evidence="4">Belongs to the cTAGE family.</text>
</comment>
<comment type="sequence caution" evidence="4">
    <conflict type="erroneous initiation">
        <sequence resource="EMBL-CDS" id="AAN77609"/>
    </conflict>
    <text>Truncated N-terminus.</text>
</comment>
<comment type="sequence caution" evidence="4">
    <conflict type="frameshift">
        <sequence resource="EMBL-CDS" id="AAN77609"/>
    </conflict>
</comment>
<protein>
    <recommendedName>
        <fullName>cTAGE family member 4</fullName>
        <shortName>Protein cTAGE-4</shortName>
    </recommendedName>
</protein>
<sequence length="777" mass="87989">MEEPGATPQPYLGLVLEELRRVVAALPESMRPDENPYGFPSELVVCAAVIGFFVVLLFLWRSFRSVRSRLYVGREQKLGATLSGLIEEKCKLLEKFSLIQKEYEGYEVESSLEDASFEKAAAEEARSLEATCEKLNRSNSELEDEILCLEKDLKEEKSKHSQQDELMADISKSIQSLEDESKSLKSQIAEAKIICKTFKMSEERRAIAIKDALNENSQLQTSHKQLFQQEAEVWKGEVSELNKQKITFEDSKVHAEQVLNDKENHIKTLTGHLPMMKDQAAVLEEDTTDDDNLELEVNSQWENGANLDDPLKGALKKLIHAAKLNVSLKSLEGERNHIIIQLSEVDKTKEELTEHIKNLQTQQASLQSENIYFESENQKLQQKLKIMTEFYQENEMKLYRKLTVEENYRIEEEEKLSRVEEKISRATEGLETYRKLAKDLEEELERTVHFYQKQVISYEKRGHDNWLAARTAERNLSDLRKENAHNKQKLTETELKFELLEKDPNALDVSNTAFGREHSPCSPSPLGRPSSETRAFPSPQTLLEDPLRLSPVLPGGGGRGPSSPGNPLDHQITNERGEPSYDRLIDPHRAPSDTGSLSSPVEQDRRMMFPPPGQSYPDSTLPPQREDRFYSNSERLSGPAEPRSFKMTSLDKMDRSMPSEMESSRNDAKDDLGNLNVPDSSLPAENEATGPGLIPPPLAPISGPLFPVDTRGPFMRRGPPFPPPPPGTMFGASRGYFPPRDFPGPPHAPFAMRNIYPPRGLPPYLHPRPGFYPNPTF</sequence>
<gene>
    <name type="primary">CTAGE4</name>
</gene>
<feature type="chain" id="PRO_0000189540" description="cTAGE family member 4">
    <location>
        <begin position="1"/>
        <end position="777"/>
    </location>
</feature>
<feature type="transmembrane region" description="Helical" evidence="1">
    <location>
        <begin position="39"/>
        <end position="59"/>
    </location>
</feature>
<feature type="region of interest" description="Disordered" evidence="2">
    <location>
        <begin position="510"/>
        <end position="688"/>
    </location>
</feature>
<feature type="region of interest" description="Disordered" evidence="2">
    <location>
        <begin position="721"/>
        <end position="742"/>
    </location>
</feature>
<feature type="coiled-coil region" evidence="1">
    <location>
        <begin position="118"/>
        <end position="269"/>
    </location>
</feature>
<feature type="coiled-coil region" evidence="1">
    <location>
        <begin position="339"/>
        <end position="494"/>
    </location>
</feature>
<feature type="compositionally biased region" description="Polar residues" evidence="2">
    <location>
        <begin position="530"/>
        <end position="541"/>
    </location>
</feature>
<feature type="compositionally biased region" description="Basic and acidic residues" evidence="2">
    <location>
        <begin position="572"/>
        <end position="591"/>
    </location>
</feature>
<feature type="compositionally biased region" description="Basic and acidic residues" evidence="2">
    <location>
        <begin position="649"/>
        <end position="672"/>
    </location>
</feature>
<feature type="sequence conflict" description="In Ref. 1; BAF84925." evidence="4" ref="1">
    <original>E</original>
    <variation>Q</variation>
    <location>
        <position position="155"/>
    </location>
</feature>
<feature type="sequence conflict" description="In Ref. 1; BAF84925." evidence="4" ref="1">
    <original>E</original>
    <variation>Q</variation>
    <location>
        <position position="237"/>
    </location>
</feature>
<feature type="sequence conflict" description="In Ref. 1; BAF84925." evidence="4" ref="1">
    <original>L</original>
    <variation>P</variation>
    <location>
        <position position="568"/>
    </location>
</feature>
<feature type="sequence conflict" description="In Ref. 3; AAN77609." evidence="4" ref="3">
    <original>R</original>
    <variation>G</variation>
    <location>
        <position position="655"/>
    </location>
</feature>
<feature type="sequence conflict" description="In Ref. 3; AAN77609." evidence="4" ref="3">
    <original>E</original>
    <variation>G</variation>
    <location>
        <position position="662"/>
    </location>
</feature>
<feature type="sequence conflict" description="In Ref. 1; BAF84925." evidence="4" ref="1">
    <original>IS</original>
    <variation>VR</variation>
    <location>
        <begin position="701"/>
        <end position="702"/>
    </location>
</feature>
<keyword id="KW-0175">Coiled coil</keyword>
<keyword id="KW-0472">Membrane</keyword>
<keyword id="KW-1185">Reference proteome</keyword>
<keyword id="KW-0812">Transmembrane</keyword>
<keyword id="KW-1133">Transmembrane helix</keyword>
<accession>Q8IX94</accession>
<accession>A8K871</accession>
<accession>O95046</accession>